<reference key="1">
    <citation type="submission" date="2008-08" db="EMBL/GenBank/DDBJ databases">
        <title>Complete sequence of Vibrio fischeri strain MJ11.</title>
        <authorList>
            <person name="Mandel M.J."/>
            <person name="Stabb E.V."/>
            <person name="Ruby E.G."/>
            <person name="Ferriera S."/>
            <person name="Johnson J."/>
            <person name="Kravitz S."/>
            <person name="Beeson K."/>
            <person name="Sutton G."/>
            <person name="Rogers Y.-H."/>
            <person name="Friedman R."/>
            <person name="Frazier M."/>
            <person name="Venter J.C."/>
        </authorList>
    </citation>
    <scope>NUCLEOTIDE SEQUENCE [LARGE SCALE GENOMIC DNA]</scope>
    <source>
        <strain>MJ11</strain>
    </source>
</reference>
<proteinExistence type="inferred from homology"/>
<evidence type="ECO:0000255" key="1">
    <source>
        <dbReference type="HAMAP-Rule" id="MF_00671"/>
    </source>
</evidence>
<organism>
    <name type="scientific">Aliivibrio fischeri (strain MJ11)</name>
    <name type="common">Vibrio fischeri</name>
    <dbReference type="NCBI Taxonomy" id="388396"/>
    <lineage>
        <taxon>Bacteria</taxon>
        <taxon>Pseudomonadati</taxon>
        <taxon>Pseudomonadota</taxon>
        <taxon>Gammaproteobacteria</taxon>
        <taxon>Vibrionales</taxon>
        <taxon>Vibrionaceae</taxon>
        <taxon>Aliivibrio</taxon>
    </lineage>
</organism>
<name>TOLB_ALIFM</name>
<dbReference type="EMBL" id="CP001139">
    <property type="protein sequence ID" value="ACH67023.1"/>
    <property type="molecule type" value="Genomic_DNA"/>
</dbReference>
<dbReference type="RefSeq" id="WP_005418621.1">
    <property type="nucleotide sequence ID" value="NC_011184.1"/>
</dbReference>
<dbReference type="SMR" id="B5FD05"/>
<dbReference type="KEGG" id="vfm:VFMJ11_1001"/>
<dbReference type="HOGENOM" id="CLU_047123_0_0_6"/>
<dbReference type="Proteomes" id="UP000001857">
    <property type="component" value="Chromosome I"/>
</dbReference>
<dbReference type="GO" id="GO:0042597">
    <property type="term" value="C:periplasmic space"/>
    <property type="evidence" value="ECO:0007669"/>
    <property type="project" value="UniProtKB-SubCell"/>
</dbReference>
<dbReference type="GO" id="GO:0051301">
    <property type="term" value="P:cell division"/>
    <property type="evidence" value="ECO:0007669"/>
    <property type="project" value="UniProtKB-UniRule"/>
</dbReference>
<dbReference type="GO" id="GO:0017038">
    <property type="term" value="P:protein import"/>
    <property type="evidence" value="ECO:0007669"/>
    <property type="project" value="InterPro"/>
</dbReference>
<dbReference type="Gene3D" id="2.120.10.30">
    <property type="entry name" value="TolB, C-terminal domain"/>
    <property type="match status" value="1"/>
</dbReference>
<dbReference type="Gene3D" id="3.40.50.10070">
    <property type="entry name" value="TolB, N-terminal domain"/>
    <property type="match status" value="1"/>
</dbReference>
<dbReference type="HAMAP" id="MF_00671">
    <property type="entry name" value="TolB"/>
    <property type="match status" value="1"/>
</dbReference>
<dbReference type="InterPro" id="IPR011042">
    <property type="entry name" value="6-blade_b-propeller_TolB-like"/>
</dbReference>
<dbReference type="InterPro" id="IPR011659">
    <property type="entry name" value="PD40"/>
</dbReference>
<dbReference type="InterPro" id="IPR014167">
    <property type="entry name" value="Tol-Pal_TolB"/>
</dbReference>
<dbReference type="InterPro" id="IPR007195">
    <property type="entry name" value="TolB_N"/>
</dbReference>
<dbReference type="NCBIfam" id="TIGR02800">
    <property type="entry name" value="propeller_TolB"/>
    <property type="match status" value="1"/>
</dbReference>
<dbReference type="PANTHER" id="PTHR36842:SF1">
    <property type="entry name" value="PROTEIN TOLB"/>
    <property type="match status" value="1"/>
</dbReference>
<dbReference type="PANTHER" id="PTHR36842">
    <property type="entry name" value="PROTEIN TOLB HOMOLOG"/>
    <property type="match status" value="1"/>
</dbReference>
<dbReference type="Pfam" id="PF07676">
    <property type="entry name" value="PD40"/>
    <property type="match status" value="3"/>
</dbReference>
<dbReference type="Pfam" id="PF04052">
    <property type="entry name" value="TolB_N"/>
    <property type="match status" value="1"/>
</dbReference>
<dbReference type="SUPFAM" id="SSF52964">
    <property type="entry name" value="TolB, N-terminal domain"/>
    <property type="match status" value="1"/>
</dbReference>
<dbReference type="SUPFAM" id="SSF69304">
    <property type="entry name" value="Tricorn protease N-terminal domain"/>
    <property type="match status" value="1"/>
</dbReference>
<gene>
    <name evidence="1" type="primary">tolB</name>
    <name type="ordered locus">VFMJ11_1001</name>
</gene>
<keyword id="KW-0131">Cell cycle</keyword>
<keyword id="KW-0132">Cell division</keyword>
<keyword id="KW-0574">Periplasm</keyword>
<keyword id="KW-0732">Signal</keyword>
<comment type="function">
    <text evidence="1">Part of the Tol-Pal system, which plays a role in outer membrane invagination during cell division and is important for maintaining outer membrane integrity.</text>
</comment>
<comment type="subunit">
    <text evidence="1">The Tol-Pal system is composed of five core proteins: the inner membrane proteins TolA, TolQ and TolR, the periplasmic protein TolB and the outer membrane protein Pal. They form a network linking the inner and outer membranes and the peptidoglycan layer.</text>
</comment>
<comment type="subcellular location">
    <subcellularLocation>
        <location evidence="1">Periplasm</location>
    </subcellularLocation>
</comment>
<comment type="similarity">
    <text evidence="1">Belongs to the TolB family.</text>
</comment>
<sequence length="450" mass="50257">MLKRWILTLFVVCLGFSQVAKAELELVITEGIDSARPIGIVPFKWHGEGKLPQDISAIISSDLQRSGKFSPIPTNKMPQTPYKDSDINYEAWTKMGVDAIVTGEVKLNAQGKYEVTYKLIDVVRGQLTKGQSKALDESGKLVLTRDHILVNKVASLSTKQLRKYAHRISDVVYEKLTGERGAFLTRIAYVVVNDKAQYPYQLRIADYDGYNERLVLKSKQPIMSPAWSPDGKKLAYVSFENRKSQIFIMNIYTGKRELIASYPRHNGAPRFSHDGDKLAIVLSKSGSLQIYVVDLKTKKMSQITRGRANNTEPFWAPDNKSLIFTSDRGGKPQIYRVNLGDGSTKRLTWQGSQNLGGQITPDGKYIVMVNRSETGFNLAKQDLETGAVQVLTKTLLDESPSIAPNGGMVIYSSIYRKQNVLSMVSIDGRFKARLPATNGRVRAPAWSPFL</sequence>
<accession>B5FD05</accession>
<protein>
    <recommendedName>
        <fullName evidence="1">Tol-Pal system protein TolB</fullName>
    </recommendedName>
</protein>
<feature type="signal peptide" evidence="1">
    <location>
        <begin position="1"/>
        <end position="22"/>
    </location>
</feature>
<feature type="chain" id="PRO_1000131538" description="Tol-Pal system protein TolB" evidence="1">
    <location>
        <begin position="23"/>
        <end position="450"/>
    </location>
</feature>